<keyword id="KW-0378">Hydrolase</keyword>
<keyword id="KW-0408">Iron</keyword>
<keyword id="KW-0479">Metal-binding</keyword>
<keyword id="KW-0648">Protein biosynthesis</keyword>
<keyword id="KW-1185">Reference proteome</keyword>
<gene>
    <name evidence="1" type="primary">def</name>
    <name type="ordered locus">DR_2434</name>
</gene>
<feature type="chain" id="PRO_0000082778" description="Peptide deformylase">
    <location>
        <begin position="1"/>
        <end position="232"/>
    </location>
</feature>
<feature type="active site" evidence="1">
    <location>
        <position position="179"/>
    </location>
</feature>
<feature type="binding site" evidence="1">
    <location>
        <position position="135"/>
    </location>
    <ligand>
        <name>Fe cation</name>
        <dbReference type="ChEBI" id="CHEBI:24875"/>
    </ligand>
</feature>
<feature type="binding site" evidence="1">
    <location>
        <position position="178"/>
    </location>
    <ligand>
        <name>Fe cation</name>
        <dbReference type="ChEBI" id="CHEBI:24875"/>
    </ligand>
</feature>
<feature type="binding site" evidence="1">
    <location>
        <position position="182"/>
    </location>
    <ligand>
        <name>Fe cation</name>
        <dbReference type="ChEBI" id="CHEBI:24875"/>
    </ligand>
</feature>
<organism>
    <name type="scientific">Deinococcus radiodurans (strain ATCC 13939 / DSM 20539 / JCM 16871 / CCUG 27074 / LMG 4051 / NBRC 15346 / NCIMB 9279 / VKM B-1422 / R1)</name>
    <dbReference type="NCBI Taxonomy" id="243230"/>
    <lineage>
        <taxon>Bacteria</taxon>
        <taxon>Thermotogati</taxon>
        <taxon>Deinococcota</taxon>
        <taxon>Deinococci</taxon>
        <taxon>Deinococcales</taxon>
        <taxon>Deinococcaceae</taxon>
        <taxon>Deinococcus</taxon>
    </lineage>
</organism>
<sequence>MTAPDSSSAPAPLAFGGKPRVYPMRLYGDPILRRKARNLTAADTLHVPGFEPQTVREVADTMLETMFEERGVGLAAPQIGLPVRMFVAVEYADDEEENEGQETPLRSRVLREYVMLNPVVKVINKKKDKSYQEGCLSIPGIYEDGVPRARQVRVDYTDLDGQPRSIEAEDYLARVFQHETDHLDGKLFLDHLPADITEDHRKDLLRIQQASKNFLAQLSEWDKAQRHLKENL</sequence>
<dbReference type="EC" id="3.5.1.88" evidence="1"/>
<dbReference type="EMBL" id="AE000513">
    <property type="protein sequence ID" value="AAF11975.1"/>
    <property type="molecule type" value="Genomic_DNA"/>
</dbReference>
<dbReference type="PIR" id="H75274">
    <property type="entry name" value="H75274"/>
</dbReference>
<dbReference type="RefSeq" id="NP_296154.1">
    <property type="nucleotide sequence ID" value="NC_001263.1"/>
</dbReference>
<dbReference type="RefSeq" id="WP_010889059.1">
    <property type="nucleotide sequence ID" value="NC_001263.1"/>
</dbReference>
<dbReference type="SMR" id="Q9RRQ4"/>
<dbReference type="FunCoup" id="Q9RRQ4">
    <property type="interactions" value="383"/>
</dbReference>
<dbReference type="STRING" id="243230.DR_2434"/>
<dbReference type="PaxDb" id="243230-DR_2434"/>
<dbReference type="EnsemblBacteria" id="AAF11975">
    <property type="protein sequence ID" value="AAF11975"/>
    <property type="gene ID" value="DR_2434"/>
</dbReference>
<dbReference type="GeneID" id="69518687"/>
<dbReference type="KEGG" id="dra:DR_2434"/>
<dbReference type="PATRIC" id="fig|243230.17.peg.2669"/>
<dbReference type="eggNOG" id="COG0242">
    <property type="taxonomic scope" value="Bacteria"/>
</dbReference>
<dbReference type="HOGENOM" id="CLU_061901_1_2_0"/>
<dbReference type="InParanoid" id="Q9RRQ4"/>
<dbReference type="OrthoDB" id="9784988at2"/>
<dbReference type="Proteomes" id="UP000002524">
    <property type="component" value="Chromosome 1"/>
</dbReference>
<dbReference type="GO" id="GO:0046872">
    <property type="term" value="F:metal ion binding"/>
    <property type="evidence" value="ECO:0007669"/>
    <property type="project" value="UniProtKB-KW"/>
</dbReference>
<dbReference type="GO" id="GO:0042586">
    <property type="term" value="F:peptide deformylase activity"/>
    <property type="evidence" value="ECO:0000318"/>
    <property type="project" value="GO_Central"/>
</dbReference>
<dbReference type="GO" id="GO:0043686">
    <property type="term" value="P:co-translational protein modification"/>
    <property type="evidence" value="ECO:0000318"/>
    <property type="project" value="GO_Central"/>
</dbReference>
<dbReference type="GO" id="GO:0006412">
    <property type="term" value="P:translation"/>
    <property type="evidence" value="ECO:0007669"/>
    <property type="project" value="UniProtKB-UniRule"/>
</dbReference>
<dbReference type="CDD" id="cd00487">
    <property type="entry name" value="Pep_deformylase"/>
    <property type="match status" value="1"/>
</dbReference>
<dbReference type="Gene3D" id="3.90.45.10">
    <property type="entry name" value="Peptide deformylase"/>
    <property type="match status" value="1"/>
</dbReference>
<dbReference type="HAMAP" id="MF_00163">
    <property type="entry name" value="Pep_deformylase"/>
    <property type="match status" value="1"/>
</dbReference>
<dbReference type="InterPro" id="IPR023635">
    <property type="entry name" value="Peptide_deformylase"/>
</dbReference>
<dbReference type="InterPro" id="IPR036821">
    <property type="entry name" value="Peptide_deformylase_sf"/>
</dbReference>
<dbReference type="NCBIfam" id="TIGR00079">
    <property type="entry name" value="pept_deformyl"/>
    <property type="match status" value="1"/>
</dbReference>
<dbReference type="NCBIfam" id="NF001159">
    <property type="entry name" value="PRK00150.1-3"/>
    <property type="match status" value="1"/>
</dbReference>
<dbReference type="PANTHER" id="PTHR10458">
    <property type="entry name" value="PEPTIDE DEFORMYLASE"/>
    <property type="match status" value="1"/>
</dbReference>
<dbReference type="PANTHER" id="PTHR10458:SF22">
    <property type="entry name" value="PEPTIDE DEFORMYLASE"/>
    <property type="match status" value="1"/>
</dbReference>
<dbReference type="Pfam" id="PF01327">
    <property type="entry name" value="Pep_deformylase"/>
    <property type="match status" value="1"/>
</dbReference>
<dbReference type="PIRSF" id="PIRSF004749">
    <property type="entry name" value="Pep_def"/>
    <property type="match status" value="1"/>
</dbReference>
<dbReference type="PRINTS" id="PR01576">
    <property type="entry name" value="PDEFORMYLASE"/>
</dbReference>
<dbReference type="SUPFAM" id="SSF56420">
    <property type="entry name" value="Peptide deformylase"/>
    <property type="match status" value="1"/>
</dbReference>
<accession>Q9RRQ4</accession>
<comment type="function">
    <text evidence="1">Removes the formyl group from the N-terminal Met of newly synthesized proteins. Requires at least a dipeptide for an efficient rate of reaction. N-terminal L-methionine is a prerequisite for activity but the enzyme has broad specificity at other positions.</text>
</comment>
<comment type="catalytic activity">
    <reaction evidence="1">
        <text>N-terminal N-formyl-L-methionyl-[peptide] + H2O = N-terminal L-methionyl-[peptide] + formate</text>
        <dbReference type="Rhea" id="RHEA:24420"/>
        <dbReference type="Rhea" id="RHEA-COMP:10639"/>
        <dbReference type="Rhea" id="RHEA-COMP:10640"/>
        <dbReference type="ChEBI" id="CHEBI:15377"/>
        <dbReference type="ChEBI" id="CHEBI:15740"/>
        <dbReference type="ChEBI" id="CHEBI:49298"/>
        <dbReference type="ChEBI" id="CHEBI:64731"/>
        <dbReference type="EC" id="3.5.1.88"/>
    </reaction>
</comment>
<comment type="cofactor">
    <cofactor evidence="1">
        <name>Fe(2+)</name>
        <dbReference type="ChEBI" id="CHEBI:29033"/>
    </cofactor>
    <text evidence="1">Binds 1 Fe(2+) ion.</text>
</comment>
<comment type="similarity">
    <text evidence="1">Belongs to the polypeptide deformylase family.</text>
</comment>
<reference key="1">
    <citation type="journal article" date="1999" name="Science">
        <title>Genome sequence of the radioresistant bacterium Deinococcus radiodurans R1.</title>
        <authorList>
            <person name="White O."/>
            <person name="Eisen J.A."/>
            <person name="Heidelberg J.F."/>
            <person name="Hickey E.K."/>
            <person name="Peterson J.D."/>
            <person name="Dodson R.J."/>
            <person name="Haft D.H."/>
            <person name="Gwinn M.L."/>
            <person name="Nelson W.C."/>
            <person name="Richardson D.L."/>
            <person name="Moffat K.S."/>
            <person name="Qin H."/>
            <person name="Jiang L."/>
            <person name="Pamphile W."/>
            <person name="Crosby M."/>
            <person name="Shen M."/>
            <person name="Vamathevan J.J."/>
            <person name="Lam P."/>
            <person name="McDonald L.A."/>
            <person name="Utterback T.R."/>
            <person name="Zalewski C."/>
            <person name="Makarova K.S."/>
            <person name="Aravind L."/>
            <person name="Daly M.J."/>
            <person name="Minton K.W."/>
            <person name="Fleischmann R.D."/>
            <person name="Ketchum K.A."/>
            <person name="Nelson K.E."/>
            <person name="Salzberg S.L."/>
            <person name="Smith H.O."/>
            <person name="Venter J.C."/>
            <person name="Fraser C.M."/>
        </authorList>
    </citation>
    <scope>NUCLEOTIDE SEQUENCE [LARGE SCALE GENOMIC DNA]</scope>
    <source>
        <strain>ATCC 13939 / DSM 20539 / JCM 16871 / CCUG 27074 / LMG 4051 / NBRC 15346 / NCIMB 9279 / VKM B-1422 / R1</strain>
    </source>
</reference>
<protein>
    <recommendedName>
        <fullName evidence="1">Peptide deformylase</fullName>
        <shortName evidence="1">PDF</shortName>
        <ecNumber evidence="1">3.5.1.88</ecNumber>
    </recommendedName>
    <alternativeName>
        <fullName evidence="1">Polypeptide deformylase</fullName>
    </alternativeName>
</protein>
<name>DEF_DEIRA</name>
<proteinExistence type="inferred from homology"/>
<evidence type="ECO:0000255" key="1">
    <source>
        <dbReference type="HAMAP-Rule" id="MF_00163"/>
    </source>
</evidence>